<evidence type="ECO:0000255" key="1">
    <source>
        <dbReference type="PROSITE-ProRule" id="PRU00388"/>
    </source>
</evidence>
<evidence type="ECO:0000305" key="2"/>
<comment type="similarity">
    <text evidence="1">Belongs to the ubiquitin-conjugating enzyme family. FTS subfamily.</text>
</comment>
<comment type="caution">
    <text evidence="2">Lacks the conserved Cys residue necessary for ubiquitin-conjugating enzyme E2 activity.</text>
</comment>
<organism>
    <name type="scientific">Drosophila yakuba</name>
    <name type="common">Fruit fly</name>
    <dbReference type="NCBI Taxonomy" id="7245"/>
    <lineage>
        <taxon>Eukaryota</taxon>
        <taxon>Metazoa</taxon>
        <taxon>Ecdysozoa</taxon>
        <taxon>Arthropoda</taxon>
        <taxon>Hexapoda</taxon>
        <taxon>Insecta</taxon>
        <taxon>Pterygota</taxon>
        <taxon>Neoptera</taxon>
        <taxon>Endopterygota</taxon>
        <taxon>Diptera</taxon>
        <taxon>Brachycera</taxon>
        <taxon>Muscomorpha</taxon>
        <taxon>Ephydroidea</taxon>
        <taxon>Drosophilidae</taxon>
        <taxon>Drosophila</taxon>
        <taxon>Sophophora</taxon>
    </lineage>
</organism>
<dbReference type="EMBL" id="CM000157">
    <property type="protein sequence ID" value="EDW89567.1"/>
    <property type="molecule type" value="Genomic_DNA"/>
</dbReference>
<dbReference type="SMR" id="B4NWM2"/>
<dbReference type="EnsemblMetazoa" id="FBtr0268491">
    <property type="protein sequence ID" value="FBpp0266983"/>
    <property type="gene ID" value="FBgn0239206"/>
</dbReference>
<dbReference type="EnsemblMetazoa" id="XM_002089819.4">
    <property type="protein sequence ID" value="XP_002089855.1"/>
    <property type="gene ID" value="LOC6528823"/>
</dbReference>
<dbReference type="GeneID" id="6528823"/>
<dbReference type="KEGG" id="dya:Dyak_GE21973"/>
<dbReference type="CTD" id="47272"/>
<dbReference type="eggNOG" id="KOG0429">
    <property type="taxonomic scope" value="Eukaryota"/>
</dbReference>
<dbReference type="HOGENOM" id="CLU_083049_1_0_1"/>
<dbReference type="OMA" id="WGFPEWR"/>
<dbReference type="OrthoDB" id="5596422at2759"/>
<dbReference type="PhylomeDB" id="B4NWM2"/>
<dbReference type="ChiTaRS" id="Ubx">
    <property type="organism name" value="fly"/>
</dbReference>
<dbReference type="Proteomes" id="UP000002282">
    <property type="component" value="Chromosome 2L"/>
</dbReference>
<dbReference type="GO" id="GO:0042742">
    <property type="term" value="P:defense response to bacterium"/>
    <property type="evidence" value="ECO:0007669"/>
    <property type="project" value="EnsemblMetazoa"/>
</dbReference>
<dbReference type="GO" id="GO:0007291">
    <property type="term" value="P:sperm individualization"/>
    <property type="evidence" value="ECO:0007669"/>
    <property type="project" value="EnsemblMetazoa"/>
</dbReference>
<dbReference type="CDD" id="cd23814">
    <property type="entry name" value="UEV_AKTIP"/>
    <property type="match status" value="1"/>
</dbReference>
<dbReference type="FunFam" id="3.10.110.10:FF:000121">
    <property type="entry name" value="Protein crossbronx"/>
    <property type="match status" value="1"/>
</dbReference>
<dbReference type="Gene3D" id="3.10.110.10">
    <property type="entry name" value="Ubiquitin Conjugating Enzyme"/>
    <property type="match status" value="1"/>
</dbReference>
<dbReference type="InterPro" id="IPR050113">
    <property type="entry name" value="Ub_conjugating_enzyme"/>
</dbReference>
<dbReference type="InterPro" id="IPR000608">
    <property type="entry name" value="UBQ-conjugat_E2_core"/>
</dbReference>
<dbReference type="InterPro" id="IPR016135">
    <property type="entry name" value="UBQ-conjugating_enzyme/RWD"/>
</dbReference>
<dbReference type="PANTHER" id="PTHR24067">
    <property type="entry name" value="UBIQUITIN-CONJUGATING ENZYME E2"/>
    <property type="match status" value="1"/>
</dbReference>
<dbReference type="Pfam" id="PF00179">
    <property type="entry name" value="UQ_con"/>
    <property type="match status" value="1"/>
</dbReference>
<dbReference type="SMART" id="SM00212">
    <property type="entry name" value="UBCc"/>
    <property type="match status" value="1"/>
</dbReference>
<dbReference type="SUPFAM" id="SSF54495">
    <property type="entry name" value="UBC-like"/>
    <property type="match status" value="1"/>
</dbReference>
<dbReference type="PROSITE" id="PS50127">
    <property type="entry name" value="UBC_2"/>
    <property type="match status" value="1"/>
</dbReference>
<name>AKTP1_DROYA</name>
<gene>
    <name type="primary">cbx</name>
    <name type="ORF">GE21973</name>
</gene>
<feature type="chain" id="PRO_0000379040" description="Protein crossbronx">
    <location>
        <begin position="1"/>
        <end position="244"/>
    </location>
</feature>
<feature type="domain" description="UBC core" evidence="1">
    <location>
        <begin position="20"/>
        <end position="176"/>
    </location>
</feature>
<proteinExistence type="inferred from homology"/>
<protein>
    <recommendedName>
        <fullName>Protein crossbronx</fullName>
    </recommendedName>
</protein>
<accession>B4NWM2</accession>
<reference key="1">
    <citation type="journal article" date="2007" name="Nature">
        <title>Evolution of genes and genomes on the Drosophila phylogeny.</title>
        <authorList>
            <consortium name="Drosophila 12 genomes consortium"/>
        </authorList>
    </citation>
    <scope>NUCLEOTIDE SEQUENCE [LARGE SCALE GENOMIC DNA]</scope>
    <source>
        <strain>Tai18E2 / Tucson 14021-0261.01</strain>
    </source>
</reference>
<sequence length="244" mass="28200">MTLDLDATKKDDKLLITTIQQEYKILAEYKMIESEKLSGIYVIPSYVNSLQWFGVFFGRQGLYMESVFRFTILLPDRFPDDKSLPTIIFQQDVIHPHVCPYTHSLDVSHAFPEWRCGEDHLWQLLKYLQAIFSDPLDSIRGIEVDKLKNSEAAELLITNKEEYMARVQKNIKESKDHIFDTPPTEDPHYIVFEKFQQDVHGPVLERIKAGRSKQTEPSVQQANGGHATGLSWVKEGEFKPLSIE</sequence>